<comment type="function">
    <text evidence="1">The UvrABC repair system catalyzes the recognition and processing of DNA lesions. UvrC both incises the 5' and 3' sides of the lesion. The N-terminal half is responsible for the 3' incision and the C-terminal half is responsible for the 5' incision.</text>
</comment>
<comment type="subunit">
    <text evidence="1">Interacts with UvrB in an incision complex.</text>
</comment>
<comment type="subcellular location">
    <subcellularLocation>
        <location evidence="1">Cytoplasm</location>
    </subcellularLocation>
</comment>
<comment type="similarity">
    <text evidence="1">Belongs to the UvrC family.</text>
</comment>
<proteinExistence type="inferred from homology"/>
<sequence>MVSIDLTTIPEEPGCYQFKDETGTILYVGKAKNLKKRVSSYFQKKSITPRIDILVSLIRDIDVIVTSSEVEALILENNLIKKYQPKYNIDLKDAKSYAFIQISNDPFPRIGIARDRTVKKTGTLYGPFVSAAERDQILKFVKQTFHLRTCKKMTKRACLRSHLGTCAAPCTGKISEPEYQYLVKSADYLLKGKSQDLIYDLRKEMETFAAAEEYEKALVIRDRIAAIENLSERQYVQRQKKSDEHIINYLVSGDTVYLILFHVERGSLTSKEEFVFPETEDFLDEFILQYYSSTKPPNELILPSLPGSGMEEYLTHIRGSHVTLTIPKQGEKKHLLDLAYKNLEVSFFTGKMRLAELGEALHMDTAPEVIECFDISHLRGTGTVASMVSFRDGKPDKRNYRRYKINSAGPSDDYAAMAEVVKRRYSRLLREKSPMPDLIVVDGGPGQLKSAHAILEELSLPIPIISIAKREEEIYIPGRNTPLSIQKKSPASLLIQEIRDEAHRFAITYQKKLRQKSIKE</sequence>
<keyword id="KW-0963">Cytoplasm</keyword>
<keyword id="KW-0227">DNA damage</keyword>
<keyword id="KW-0228">DNA excision</keyword>
<keyword id="KW-0234">DNA repair</keyword>
<keyword id="KW-0267">Excision nuclease</keyword>
<keyword id="KW-1185">Reference proteome</keyword>
<keyword id="KW-0742">SOS response</keyword>
<dbReference type="EMBL" id="CP000254">
    <property type="protein sequence ID" value="ABD40909.1"/>
    <property type="molecule type" value="Genomic_DNA"/>
</dbReference>
<dbReference type="RefSeq" id="WP_011448187.1">
    <property type="nucleotide sequence ID" value="NC_007796.1"/>
</dbReference>
<dbReference type="SMR" id="Q2FPC6"/>
<dbReference type="STRING" id="323259.Mhun_1161"/>
<dbReference type="EnsemblBacteria" id="ABD40909">
    <property type="protein sequence ID" value="ABD40909"/>
    <property type="gene ID" value="Mhun_1161"/>
</dbReference>
<dbReference type="GeneID" id="3922969"/>
<dbReference type="KEGG" id="mhu:Mhun_1161"/>
<dbReference type="eggNOG" id="arCOG04753">
    <property type="taxonomic scope" value="Archaea"/>
</dbReference>
<dbReference type="HOGENOM" id="CLU_014841_3_2_2"/>
<dbReference type="InParanoid" id="Q2FPC6"/>
<dbReference type="OrthoDB" id="121419at2157"/>
<dbReference type="Proteomes" id="UP000001941">
    <property type="component" value="Chromosome"/>
</dbReference>
<dbReference type="GO" id="GO:0005737">
    <property type="term" value="C:cytoplasm"/>
    <property type="evidence" value="ECO:0007669"/>
    <property type="project" value="UniProtKB-SubCell"/>
</dbReference>
<dbReference type="GO" id="GO:0009380">
    <property type="term" value="C:excinuclease repair complex"/>
    <property type="evidence" value="ECO:0007669"/>
    <property type="project" value="InterPro"/>
</dbReference>
<dbReference type="GO" id="GO:0003677">
    <property type="term" value="F:DNA binding"/>
    <property type="evidence" value="ECO:0007669"/>
    <property type="project" value="UniProtKB-UniRule"/>
</dbReference>
<dbReference type="GO" id="GO:0009381">
    <property type="term" value="F:excinuclease ABC activity"/>
    <property type="evidence" value="ECO:0007669"/>
    <property type="project" value="UniProtKB-UniRule"/>
</dbReference>
<dbReference type="GO" id="GO:0006289">
    <property type="term" value="P:nucleotide-excision repair"/>
    <property type="evidence" value="ECO:0007669"/>
    <property type="project" value="UniProtKB-UniRule"/>
</dbReference>
<dbReference type="GO" id="GO:0009432">
    <property type="term" value="P:SOS response"/>
    <property type="evidence" value="ECO:0007669"/>
    <property type="project" value="UniProtKB-UniRule"/>
</dbReference>
<dbReference type="CDD" id="cd10434">
    <property type="entry name" value="GIY-YIG_UvrC_Cho"/>
    <property type="match status" value="1"/>
</dbReference>
<dbReference type="FunFam" id="3.30.420.340:FF:000001">
    <property type="entry name" value="UvrABC system protein C"/>
    <property type="match status" value="1"/>
</dbReference>
<dbReference type="FunFam" id="3.40.1440.10:FF:000001">
    <property type="entry name" value="UvrABC system protein C"/>
    <property type="match status" value="1"/>
</dbReference>
<dbReference type="Gene3D" id="3.40.1440.10">
    <property type="entry name" value="GIY-YIG endonuclease"/>
    <property type="match status" value="1"/>
</dbReference>
<dbReference type="Gene3D" id="4.10.860.10">
    <property type="entry name" value="UVR domain"/>
    <property type="match status" value="1"/>
</dbReference>
<dbReference type="Gene3D" id="3.30.420.340">
    <property type="entry name" value="UvrC, RNAse H endonuclease domain"/>
    <property type="match status" value="1"/>
</dbReference>
<dbReference type="HAMAP" id="MF_00203">
    <property type="entry name" value="UvrC"/>
    <property type="match status" value="1"/>
</dbReference>
<dbReference type="InterPro" id="IPR000305">
    <property type="entry name" value="GIY-YIG_endonuc"/>
</dbReference>
<dbReference type="InterPro" id="IPR035901">
    <property type="entry name" value="GIY-YIG_endonuc_sf"/>
</dbReference>
<dbReference type="InterPro" id="IPR047296">
    <property type="entry name" value="GIY-YIG_UvrC_Cho"/>
</dbReference>
<dbReference type="InterPro" id="IPR001943">
    <property type="entry name" value="UVR_dom"/>
</dbReference>
<dbReference type="InterPro" id="IPR036876">
    <property type="entry name" value="UVR_dom_sf"/>
</dbReference>
<dbReference type="InterPro" id="IPR050066">
    <property type="entry name" value="UvrABC_protein_C"/>
</dbReference>
<dbReference type="InterPro" id="IPR004791">
    <property type="entry name" value="UvrC"/>
</dbReference>
<dbReference type="InterPro" id="IPR001162">
    <property type="entry name" value="UvrC_RNase_H_dom"/>
</dbReference>
<dbReference type="InterPro" id="IPR038476">
    <property type="entry name" value="UvrC_RNase_H_dom_sf"/>
</dbReference>
<dbReference type="NCBIfam" id="TIGR00194">
    <property type="entry name" value="uvrC"/>
    <property type="match status" value="1"/>
</dbReference>
<dbReference type="PANTHER" id="PTHR30562:SF1">
    <property type="entry name" value="UVRABC SYSTEM PROTEIN C"/>
    <property type="match status" value="1"/>
</dbReference>
<dbReference type="PANTHER" id="PTHR30562">
    <property type="entry name" value="UVRC/OXIDOREDUCTASE"/>
    <property type="match status" value="1"/>
</dbReference>
<dbReference type="Pfam" id="PF01541">
    <property type="entry name" value="GIY-YIG"/>
    <property type="match status" value="1"/>
</dbReference>
<dbReference type="Pfam" id="PF02151">
    <property type="entry name" value="UVR"/>
    <property type="match status" value="1"/>
</dbReference>
<dbReference type="Pfam" id="PF22920">
    <property type="entry name" value="UvrC_RNaseH"/>
    <property type="match status" value="1"/>
</dbReference>
<dbReference type="Pfam" id="PF08459">
    <property type="entry name" value="UvrC_RNaseH_dom"/>
    <property type="match status" value="1"/>
</dbReference>
<dbReference type="SMART" id="SM00465">
    <property type="entry name" value="GIYc"/>
    <property type="match status" value="1"/>
</dbReference>
<dbReference type="SUPFAM" id="SSF46600">
    <property type="entry name" value="C-terminal UvrC-binding domain of UvrB"/>
    <property type="match status" value="1"/>
</dbReference>
<dbReference type="SUPFAM" id="SSF82771">
    <property type="entry name" value="GIY-YIG endonuclease"/>
    <property type="match status" value="1"/>
</dbReference>
<dbReference type="PROSITE" id="PS50164">
    <property type="entry name" value="GIY_YIG"/>
    <property type="match status" value="1"/>
</dbReference>
<dbReference type="PROSITE" id="PS50151">
    <property type="entry name" value="UVR"/>
    <property type="match status" value="1"/>
</dbReference>
<dbReference type="PROSITE" id="PS50165">
    <property type="entry name" value="UVRC"/>
    <property type="match status" value="1"/>
</dbReference>
<name>UVRC_METHJ</name>
<gene>
    <name evidence="1" type="primary">uvrC</name>
    <name type="ordered locus">Mhun_1161</name>
</gene>
<feature type="chain" id="PRO_0000264987" description="UvrABC system protein C">
    <location>
        <begin position="1"/>
        <end position="520"/>
    </location>
</feature>
<feature type="domain" description="GIY-YIG" evidence="1">
    <location>
        <begin position="11"/>
        <end position="89"/>
    </location>
</feature>
<feature type="domain" description="UVR" evidence="1">
    <location>
        <begin position="195"/>
        <end position="230"/>
    </location>
</feature>
<accession>Q2FPC6</accession>
<organism>
    <name type="scientific">Methanospirillum hungatei JF-1 (strain ATCC 27890 / DSM 864 / NBRC 100397 / JF-1)</name>
    <dbReference type="NCBI Taxonomy" id="323259"/>
    <lineage>
        <taxon>Archaea</taxon>
        <taxon>Methanobacteriati</taxon>
        <taxon>Methanobacteriota</taxon>
        <taxon>Stenosarchaea group</taxon>
        <taxon>Methanomicrobia</taxon>
        <taxon>Methanomicrobiales</taxon>
        <taxon>Methanospirillaceae</taxon>
        <taxon>Methanospirillum</taxon>
    </lineage>
</organism>
<reference key="1">
    <citation type="journal article" date="2016" name="Stand. Genomic Sci.">
        <title>Complete genome sequence of Methanospirillum hungatei type strain JF1.</title>
        <authorList>
            <person name="Gunsalus R.P."/>
            <person name="Cook L.E."/>
            <person name="Crable B."/>
            <person name="Rohlin L."/>
            <person name="McDonald E."/>
            <person name="Mouttaki H."/>
            <person name="Sieber J.R."/>
            <person name="Poweleit N."/>
            <person name="Zhou H."/>
            <person name="Lapidus A.L."/>
            <person name="Daligault H.E."/>
            <person name="Land M."/>
            <person name="Gilna P."/>
            <person name="Ivanova N."/>
            <person name="Kyrpides N."/>
            <person name="Culley D.E."/>
            <person name="McInerney M.J."/>
        </authorList>
    </citation>
    <scope>NUCLEOTIDE SEQUENCE [LARGE SCALE GENOMIC DNA]</scope>
    <source>
        <strain>ATCC 27890 / DSM 864 / NBRC 100397 / JF-1</strain>
    </source>
</reference>
<evidence type="ECO:0000255" key="1">
    <source>
        <dbReference type="HAMAP-Rule" id="MF_00203"/>
    </source>
</evidence>
<protein>
    <recommendedName>
        <fullName evidence="1">UvrABC system protein C</fullName>
        <shortName evidence="1">Protein UvrC</shortName>
    </recommendedName>
    <alternativeName>
        <fullName evidence="1">Excinuclease ABC subunit C</fullName>
    </alternativeName>
</protein>